<proteinExistence type="inferred from homology"/>
<reference key="1">
    <citation type="journal article" date="2007" name="PLoS Genet.">
        <title>Patterns and implications of gene gain and loss in the evolution of Prochlorococcus.</title>
        <authorList>
            <person name="Kettler G.C."/>
            <person name="Martiny A.C."/>
            <person name="Huang K."/>
            <person name="Zucker J."/>
            <person name="Coleman M.L."/>
            <person name="Rodrigue S."/>
            <person name="Chen F."/>
            <person name="Lapidus A."/>
            <person name="Ferriera S."/>
            <person name="Johnson J."/>
            <person name="Steglich C."/>
            <person name="Church G.M."/>
            <person name="Richardson P."/>
            <person name="Chisholm S.W."/>
        </authorList>
    </citation>
    <scope>NUCLEOTIDE SEQUENCE [LARGE SCALE GENOMIC DNA]</scope>
    <source>
        <strain>MIT 9515</strain>
    </source>
</reference>
<protein>
    <recommendedName>
        <fullName evidence="1">Large ribosomal subunit protein bL36B</fullName>
    </recommendedName>
    <alternativeName>
        <fullName evidence="2">50S ribosomal protein L36 2</fullName>
    </alternativeName>
</protein>
<gene>
    <name evidence="1" type="primary">rpmJ2</name>
    <name type="ordered locus">P9515_17201</name>
</gene>
<accession>A2BYR6</accession>
<keyword id="KW-0687">Ribonucleoprotein</keyword>
<keyword id="KW-0689">Ribosomal protein</keyword>
<comment type="similarity">
    <text evidence="1">Belongs to the bacterial ribosomal protein bL36 family.</text>
</comment>
<dbReference type="EMBL" id="CP000552">
    <property type="protein sequence ID" value="ABM72927.1"/>
    <property type="molecule type" value="Genomic_DNA"/>
</dbReference>
<dbReference type="SMR" id="A2BYR6"/>
<dbReference type="STRING" id="167542.P9515_17201"/>
<dbReference type="GeneID" id="60200927"/>
<dbReference type="KEGG" id="pmc:P9515_17201"/>
<dbReference type="eggNOG" id="COG0257">
    <property type="taxonomic scope" value="Bacteria"/>
</dbReference>
<dbReference type="HOGENOM" id="CLU_135723_6_2_3"/>
<dbReference type="OrthoDB" id="9802520at2"/>
<dbReference type="Proteomes" id="UP000001589">
    <property type="component" value="Chromosome"/>
</dbReference>
<dbReference type="GO" id="GO:0005737">
    <property type="term" value="C:cytoplasm"/>
    <property type="evidence" value="ECO:0007669"/>
    <property type="project" value="UniProtKB-ARBA"/>
</dbReference>
<dbReference type="GO" id="GO:1990904">
    <property type="term" value="C:ribonucleoprotein complex"/>
    <property type="evidence" value="ECO:0007669"/>
    <property type="project" value="UniProtKB-KW"/>
</dbReference>
<dbReference type="GO" id="GO:0005840">
    <property type="term" value="C:ribosome"/>
    <property type="evidence" value="ECO:0007669"/>
    <property type="project" value="UniProtKB-KW"/>
</dbReference>
<dbReference type="GO" id="GO:0003735">
    <property type="term" value="F:structural constituent of ribosome"/>
    <property type="evidence" value="ECO:0007669"/>
    <property type="project" value="InterPro"/>
</dbReference>
<dbReference type="GO" id="GO:0006412">
    <property type="term" value="P:translation"/>
    <property type="evidence" value="ECO:0007669"/>
    <property type="project" value="UniProtKB-UniRule"/>
</dbReference>
<dbReference type="HAMAP" id="MF_00251">
    <property type="entry name" value="Ribosomal_bL36"/>
    <property type="match status" value="1"/>
</dbReference>
<dbReference type="InterPro" id="IPR000473">
    <property type="entry name" value="Ribosomal_bL36"/>
</dbReference>
<dbReference type="InterPro" id="IPR035977">
    <property type="entry name" value="Ribosomal_bL36_sp"/>
</dbReference>
<dbReference type="NCBIfam" id="TIGR01022">
    <property type="entry name" value="rpmJ_bact"/>
    <property type="match status" value="1"/>
</dbReference>
<dbReference type="PANTHER" id="PTHR42888">
    <property type="entry name" value="50S RIBOSOMAL PROTEIN L36, CHLOROPLASTIC"/>
    <property type="match status" value="1"/>
</dbReference>
<dbReference type="PANTHER" id="PTHR42888:SF1">
    <property type="entry name" value="LARGE RIBOSOMAL SUBUNIT PROTEIN BL36C"/>
    <property type="match status" value="1"/>
</dbReference>
<dbReference type="Pfam" id="PF00444">
    <property type="entry name" value="Ribosomal_L36"/>
    <property type="match status" value="1"/>
</dbReference>
<dbReference type="SUPFAM" id="SSF57840">
    <property type="entry name" value="Ribosomal protein L36"/>
    <property type="match status" value="1"/>
</dbReference>
<dbReference type="PROSITE" id="PS00828">
    <property type="entry name" value="RIBOSOMAL_L36"/>
    <property type="match status" value="1"/>
</dbReference>
<feature type="chain" id="PRO_0000344702" description="Large ribosomal subunit protein bL36B">
    <location>
        <begin position="1"/>
        <end position="38"/>
    </location>
</feature>
<evidence type="ECO:0000255" key="1">
    <source>
        <dbReference type="HAMAP-Rule" id="MF_00251"/>
    </source>
</evidence>
<evidence type="ECO:0000305" key="2"/>
<organism>
    <name type="scientific">Prochlorococcus marinus (strain MIT 9515)</name>
    <dbReference type="NCBI Taxonomy" id="167542"/>
    <lineage>
        <taxon>Bacteria</taxon>
        <taxon>Bacillati</taxon>
        <taxon>Cyanobacteriota</taxon>
        <taxon>Cyanophyceae</taxon>
        <taxon>Synechococcales</taxon>
        <taxon>Prochlorococcaceae</taxon>
        <taxon>Prochlorococcus</taxon>
    </lineage>
</organism>
<sequence>MKVRASVKKMCDKCRVIRRHGRVMVICTASPRHKQRQG</sequence>
<name>RL362_PROM5</name>